<sequence length="288" mass="31754">MALFRKKDKYIRITPNNSLKGSVSHNVPEVPDELFAKCPACKHMIYKKDLGLAKICPTCSYNFRISAQERLTLTVDEGSFQELFTSIETKDPLRFPGYQEKLQKAKETTGLHEAVLTGKAMVKGQQIALAIMDSHFIMASMGTVVGEKITRLFELAIEENLPVVIFTASGGARMQEGIMSLMQMAKVSAAVKRHSNAGLFYLTILTDPTTGGVTASFAMEGDIILAEPQSLVGFAGRRVIETTVRENLPDDFQKAEFLQDHGFVDAIVKRTELRDKIAHLVAFHGGGQ</sequence>
<reference key="1">
    <citation type="journal article" date="2006" name="Proc. Natl. Acad. Sci. U.S.A.">
        <title>Molecular genetic anatomy of inter- and intraserotype variation in the human bacterial pathogen group A Streptococcus.</title>
        <authorList>
            <person name="Beres S.B."/>
            <person name="Richter E.W."/>
            <person name="Nagiec M.J."/>
            <person name="Sumby P."/>
            <person name="Porcella S.F."/>
            <person name="DeLeo F.R."/>
            <person name="Musser J.M."/>
        </authorList>
    </citation>
    <scope>NUCLEOTIDE SEQUENCE [LARGE SCALE GENOMIC DNA]</scope>
    <source>
        <strain>MGAS10750</strain>
    </source>
</reference>
<organism>
    <name type="scientific">Streptococcus pyogenes serotype M4 (strain MGAS10750)</name>
    <dbReference type="NCBI Taxonomy" id="370554"/>
    <lineage>
        <taxon>Bacteria</taxon>
        <taxon>Bacillati</taxon>
        <taxon>Bacillota</taxon>
        <taxon>Bacilli</taxon>
        <taxon>Lactobacillales</taxon>
        <taxon>Streptococcaceae</taxon>
        <taxon>Streptococcus</taxon>
    </lineage>
</organism>
<proteinExistence type="inferred from homology"/>
<protein>
    <recommendedName>
        <fullName evidence="1">Acetyl-coenzyme A carboxylase carboxyl transferase subunit beta</fullName>
        <shortName evidence="1">ACCase subunit beta</shortName>
        <shortName evidence="1">Acetyl-CoA carboxylase carboxyltransferase subunit beta</shortName>
        <ecNumber evidence="1">2.1.3.15</ecNumber>
    </recommendedName>
</protein>
<name>ACCD_STRPF</name>
<evidence type="ECO:0000255" key="1">
    <source>
        <dbReference type="HAMAP-Rule" id="MF_01395"/>
    </source>
</evidence>
<evidence type="ECO:0000255" key="2">
    <source>
        <dbReference type="PROSITE-ProRule" id="PRU01136"/>
    </source>
</evidence>
<feature type="chain" id="PRO_0000389880" description="Acetyl-coenzyme A carboxylase carboxyl transferase subunit beta">
    <location>
        <begin position="1"/>
        <end position="288"/>
    </location>
</feature>
<feature type="domain" description="CoA carboxyltransferase N-terminal" evidence="2">
    <location>
        <begin position="34"/>
        <end position="288"/>
    </location>
</feature>
<feature type="zinc finger region" description="C4-type" evidence="1">
    <location>
        <begin position="38"/>
        <end position="59"/>
    </location>
</feature>
<feature type="binding site" evidence="1">
    <location>
        <position position="38"/>
    </location>
    <ligand>
        <name>Zn(2+)</name>
        <dbReference type="ChEBI" id="CHEBI:29105"/>
    </ligand>
</feature>
<feature type="binding site" evidence="1">
    <location>
        <position position="41"/>
    </location>
    <ligand>
        <name>Zn(2+)</name>
        <dbReference type="ChEBI" id="CHEBI:29105"/>
    </ligand>
</feature>
<feature type="binding site" evidence="1">
    <location>
        <position position="56"/>
    </location>
    <ligand>
        <name>Zn(2+)</name>
        <dbReference type="ChEBI" id="CHEBI:29105"/>
    </ligand>
</feature>
<feature type="binding site" evidence="1">
    <location>
        <position position="59"/>
    </location>
    <ligand>
        <name>Zn(2+)</name>
        <dbReference type="ChEBI" id="CHEBI:29105"/>
    </ligand>
</feature>
<comment type="function">
    <text evidence="1">Component of the acetyl coenzyme A carboxylase (ACC) complex. Biotin carboxylase (BC) catalyzes the carboxylation of biotin on its carrier protein (BCCP) and then the CO(2) group is transferred by the transcarboxylase to acetyl-CoA to form malonyl-CoA.</text>
</comment>
<comment type="catalytic activity">
    <reaction evidence="1">
        <text>N(6)-carboxybiotinyl-L-lysyl-[protein] + acetyl-CoA = N(6)-biotinyl-L-lysyl-[protein] + malonyl-CoA</text>
        <dbReference type="Rhea" id="RHEA:54728"/>
        <dbReference type="Rhea" id="RHEA-COMP:10505"/>
        <dbReference type="Rhea" id="RHEA-COMP:10506"/>
        <dbReference type="ChEBI" id="CHEBI:57288"/>
        <dbReference type="ChEBI" id="CHEBI:57384"/>
        <dbReference type="ChEBI" id="CHEBI:83144"/>
        <dbReference type="ChEBI" id="CHEBI:83145"/>
        <dbReference type="EC" id="2.1.3.15"/>
    </reaction>
</comment>
<comment type="cofactor">
    <cofactor evidence="1">
        <name>Zn(2+)</name>
        <dbReference type="ChEBI" id="CHEBI:29105"/>
    </cofactor>
    <text evidence="1">Binds 1 zinc ion per subunit.</text>
</comment>
<comment type="pathway">
    <text evidence="1">Lipid metabolism; malonyl-CoA biosynthesis; malonyl-CoA from acetyl-CoA: step 1/1.</text>
</comment>
<comment type="subunit">
    <text evidence="1">Acetyl-CoA carboxylase is a heterohexamer composed of biotin carboxyl carrier protein (AccB), biotin carboxylase (AccC) and two subunits each of ACCase subunit alpha (AccA) and ACCase subunit beta (AccD).</text>
</comment>
<comment type="subcellular location">
    <subcellularLocation>
        <location evidence="1">Cytoplasm</location>
    </subcellularLocation>
</comment>
<comment type="similarity">
    <text evidence="1">Belongs to the AccD/PCCB family.</text>
</comment>
<dbReference type="EC" id="2.1.3.15" evidence="1"/>
<dbReference type="EMBL" id="CP000262">
    <property type="protein sequence ID" value="ABF38494.1"/>
    <property type="molecule type" value="Genomic_DNA"/>
</dbReference>
<dbReference type="SMR" id="Q1J592"/>
<dbReference type="KEGG" id="spi:MGAS10750_Spy1544"/>
<dbReference type="HOGENOM" id="CLU_015486_1_1_9"/>
<dbReference type="UniPathway" id="UPA00655">
    <property type="reaction ID" value="UER00711"/>
</dbReference>
<dbReference type="Proteomes" id="UP000002434">
    <property type="component" value="Chromosome"/>
</dbReference>
<dbReference type="GO" id="GO:0009317">
    <property type="term" value="C:acetyl-CoA carboxylase complex"/>
    <property type="evidence" value="ECO:0007669"/>
    <property type="project" value="InterPro"/>
</dbReference>
<dbReference type="GO" id="GO:0003989">
    <property type="term" value="F:acetyl-CoA carboxylase activity"/>
    <property type="evidence" value="ECO:0007669"/>
    <property type="project" value="InterPro"/>
</dbReference>
<dbReference type="GO" id="GO:0005524">
    <property type="term" value="F:ATP binding"/>
    <property type="evidence" value="ECO:0007669"/>
    <property type="project" value="UniProtKB-KW"/>
</dbReference>
<dbReference type="GO" id="GO:0016743">
    <property type="term" value="F:carboxyl- or carbamoyltransferase activity"/>
    <property type="evidence" value="ECO:0007669"/>
    <property type="project" value="UniProtKB-UniRule"/>
</dbReference>
<dbReference type="GO" id="GO:0008270">
    <property type="term" value="F:zinc ion binding"/>
    <property type="evidence" value="ECO:0007669"/>
    <property type="project" value="UniProtKB-UniRule"/>
</dbReference>
<dbReference type="GO" id="GO:0006633">
    <property type="term" value="P:fatty acid biosynthetic process"/>
    <property type="evidence" value="ECO:0007669"/>
    <property type="project" value="UniProtKB-KW"/>
</dbReference>
<dbReference type="GO" id="GO:2001295">
    <property type="term" value="P:malonyl-CoA biosynthetic process"/>
    <property type="evidence" value="ECO:0007669"/>
    <property type="project" value="UniProtKB-UniRule"/>
</dbReference>
<dbReference type="Gene3D" id="3.90.226.10">
    <property type="entry name" value="2-enoyl-CoA Hydratase, Chain A, domain 1"/>
    <property type="match status" value="1"/>
</dbReference>
<dbReference type="HAMAP" id="MF_01395">
    <property type="entry name" value="AcetylCoA_CT_beta"/>
    <property type="match status" value="1"/>
</dbReference>
<dbReference type="InterPro" id="IPR034733">
    <property type="entry name" value="AcCoA_carboxyl_beta"/>
</dbReference>
<dbReference type="InterPro" id="IPR000438">
    <property type="entry name" value="Acetyl_CoA_COase_Trfase_b_su"/>
</dbReference>
<dbReference type="InterPro" id="IPR029045">
    <property type="entry name" value="ClpP/crotonase-like_dom_sf"/>
</dbReference>
<dbReference type="InterPro" id="IPR011762">
    <property type="entry name" value="COA_CT_N"/>
</dbReference>
<dbReference type="NCBIfam" id="TIGR00515">
    <property type="entry name" value="accD"/>
    <property type="match status" value="1"/>
</dbReference>
<dbReference type="PANTHER" id="PTHR42995">
    <property type="entry name" value="ACETYL-COENZYME A CARBOXYLASE CARBOXYL TRANSFERASE SUBUNIT BETA, CHLOROPLASTIC"/>
    <property type="match status" value="1"/>
</dbReference>
<dbReference type="PANTHER" id="PTHR42995:SF5">
    <property type="entry name" value="ACETYL-COENZYME A CARBOXYLASE CARBOXYL TRANSFERASE SUBUNIT BETA, CHLOROPLASTIC"/>
    <property type="match status" value="1"/>
</dbReference>
<dbReference type="Pfam" id="PF01039">
    <property type="entry name" value="Carboxyl_trans"/>
    <property type="match status" value="1"/>
</dbReference>
<dbReference type="PRINTS" id="PR01070">
    <property type="entry name" value="ACCCTRFRASEB"/>
</dbReference>
<dbReference type="SUPFAM" id="SSF52096">
    <property type="entry name" value="ClpP/crotonase"/>
    <property type="match status" value="1"/>
</dbReference>
<dbReference type="PROSITE" id="PS50980">
    <property type="entry name" value="COA_CT_NTER"/>
    <property type="match status" value="1"/>
</dbReference>
<accession>Q1J592</accession>
<keyword id="KW-0067">ATP-binding</keyword>
<keyword id="KW-0963">Cytoplasm</keyword>
<keyword id="KW-0275">Fatty acid biosynthesis</keyword>
<keyword id="KW-0276">Fatty acid metabolism</keyword>
<keyword id="KW-0444">Lipid biosynthesis</keyword>
<keyword id="KW-0443">Lipid metabolism</keyword>
<keyword id="KW-0479">Metal-binding</keyword>
<keyword id="KW-0547">Nucleotide-binding</keyword>
<keyword id="KW-0808">Transferase</keyword>
<keyword id="KW-0862">Zinc</keyword>
<keyword id="KW-0863">Zinc-finger</keyword>
<gene>
    <name evidence="1" type="primary">accD</name>
    <name type="ordered locus">MGAS10750_Spy1544</name>
</gene>